<sequence>MDSNTVSSFQDILMRMSKMQLGSSSEDLNGMITQFESLRLYRDSLGEAVMRMGDLHSLQSRNGKWREQLSQKFEEIRWLIEEVRHRLKITENSFEQITFMQALQLLLEVEQEIRTFSFQLI</sequence>
<keyword id="KW-0025">Alternative splicing</keyword>
<keyword id="KW-1048">Host nucleus</keyword>
<keyword id="KW-0945">Host-virus interaction</keyword>
<keyword id="KW-0813">Transport</keyword>
<keyword id="KW-0946">Virion</keyword>
<organism>
    <name type="scientific">Influenza A virus (strain A/Mallard/Ohio/556/1987 H5N9)</name>
    <dbReference type="NCBI Taxonomy" id="293055"/>
    <lineage>
        <taxon>Viruses</taxon>
        <taxon>Riboviria</taxon>
        <taxon>Orthornavirae</taxon>
        <taxon>Negarnaviricota</taxon>
        <taxon>Polyploviricotina</taxon>
        <taxon>Insthoviricetes</taxon>
        <taxon>Articulavirales</taxon>
        <taxon>Orthomyxoviridae</taxon>
        <taxon>Alphainfluenzavirus</taxon>
        <taxon>Alphainfluenzavirus influenzae</taxon>
        <taxon>Influenza A virus</taxon>
    </lineage>
</organism>
<feature type="chain" id="PRO_0000260831" description="Nuclear export protein">
    <location>
        <begin position="1"/>
        <end position="121"/>
    </location>
</feature>
<feature type="short sequence motif" description="Nuclear export signal" evidence="1">
    <location>
        <begin position="12"/>
        <end position="21"/>
    </location>
</feature>
<feature type="short sequence motif" description="Nuclear export signal" evidence="1">
    <location>
        <begin position="85"/>
        <end position="94"/>
    </location>
</feature>
<comment type="function">
    <text evidence="1">Mediates the nuclear export of encapsidated genomic RNAs (ribonucleoproteins, RNPs). Acts as an adapter between viral RNPs complexes and the nuclear export machinery of the cell. Possesses no intrinsic RNA-binding activity, but includes a C-terminal M1-binding domain. This domain is believed to allow recognition of RNPs bound to the protein M1. Since protein M1 is not available in large quantities before late stages of infection, such an indirect recognition mechanism probably ensures that genomic RNPs are not exported from the host nucleus until sufficient quantities of viral mRNA and progeny genomic RNA have been synthesized. Furthermore, the RNPs enter the host cytoplasm only when associated with the M1 protein that is necessary to guide them to the plasma membrane. May down-regulate viral RNA synthesis when overproduced.</text>
</comment>
<comment type="subunit">
    <text evidence="1">Interacts with protein M1. May interact with host nucleoporin RAB/HRB and exportin XPO1/CRM1.</text>
</comment>
<comment type="subcellular location">
    <subcellularLocation>
        <location evidence="1">Virion</location>
    </subcellularLocation>
    <subcellularLocation>
        <location evidence="1">Host nucleus</location>
    </subcellularLocation>
</comment>
<comment type="alternative products">
    <event type="alternative splicing"/>
    <isoform>
        <id>O41650-1</id>
        <name>NEP</name>
        <name>NS2</name>
        <sequence type="displayed"/>
    </isoform>
    <isoform>
        <id>O41649-1</id>
        <name>NS1</name>
        <sequence type="external"/>
    </isoform>
</comment>
<comment type="miscellaneous">
    <text>Average number present in a viral particle is estimated to be 130-200 molecules.</text>
</comment>
<comment type="similarity">
    <text evidence="1">Belongs to the influenza viruses NEP family.</text>
</comment>
<reference key="1">
    <citation type="journal article" date="1997" name="Virus Res.">
        <title>Evolution of H5 subtype avian influenza A viruses in North America.</title>
        <authorList>
            <person name="Garcia M."/>
            <person name="Suarez D.L."/>
            <person name="Crawford J.M."/>
            <person name="Latimer J.W."/>
            <person name="Slemons R.D."/>
            <person name="Swayne D.E."/>
            <person name="Purdue M.L."/>
        </authorList>
    </citation>
    <scope>NUCLEOTIDE SEQUENCE [GENOMIC RNA]</scope>
</reference>
<accession>O41650</accession>
<organismHost>
    <name type="scientific">Aves</name>
    <dbReference type="NCBI Taxonomy" id="8782"/>
</organismHost>
<gene>
    <name evidence="1" type="primary">NS</name>
</gene>
<dbReference type="EMBL" id="U85377">
    <property type="protein sequence ID" value="AAC40654.1"/>
    <property type="molecule type" value="Genomic_RNA"/>
</dbReference>
<dbReference type="SMR" id="O41650"/>
<dbReference type="GO" id="GO:0042025">
    <property type="term" value="C:host cell nucleus"/>
    <property type="evidence" value="ECO:0007669"/>
    <property type="project" value="UniProtKB-SubCell"/>
</dbReference>
<dbReference type="GO" id="GO:0044423">
    <property type="term" value="C:virion component"/>
    <property type="evidence" value="ECO:0007669"/>
    <property type="project" value="UniProtKB-UniRule"/>
</dbReference>
<dbReference type="GO" id="GO:0039675">
    <property type="term" value="P:exit of virus from host cell nucleus through nuclear pore"/>
    <property type="evidence" value="ECO:0007669"/>
    <property type="project" value="UniProtKB-UniRule"/>
</dbReference>
<dbReference type="Gene3D" id="1.10.287.230">
    <property type="match status" value="1"/>
</dbReference>
<dbReference type="Gene3D" id="1.10.287.10">
    <property type="entry name" value="S15/NS1, RNA-binding"/>
    <property type="match status" value="1"/>
</dbReference>
<dbReference type="HAMAP" id="MF_04067">
    <property type="entry name" value="INFV_NEP"/>
    <property type="match status" value="1"/>
</dbReference>
<dbReference type="InterPro" id="IPR000968">
    <property type="entry name" value="Flu_NS2"/>
</dbReference>
<dbReference type="Pfam" id="PF00601">
    <property type="entry name" value="Flu_NS2"/>
    <property type="match status" value="1"/>
</dbReference>
<dbReference type="SUPFAM" id="SSF101156">
    <property type="entry name" value="Nonstructural protein ns2, Nep, M1-binding domain"/>
    <property type="match status" value="1"/>
</dbReference>
<evidence type="ECO:0000255" key="1">
    <source>
        <dbReference type="HAMAP-Rule" id="MF_04067"/>
    </source>
</evidence>
<name>NEP_I87A1</name>
<proteinExistence type="inferred from homology"/>
<protein>
    <recommendedName>
        <fullName evidence="1">Nuclear export protein</fullName>
        <shortName evidence="1">NEP</shortName>
    </recommendedName>
    <alternativeName>
        <fullName evidence="1">Non-structural protein 2</fullName>
        <shortName evidence="1">NS2</shortName>
    </alternativeName>
</protein>